<reference key="1">
    <citation type="journal article" date="2005" name="DNA Res.">
        <title>Complete genome sequence of the facultative anaerobic magnetotactic bacterium Magnetospirillum sp. strain AMB-1.</title>
        <authorList>
            <person name="Matsunaga T."/>
            <person name="Okamura Y."/>
            <person name="Fukuda Y."/>
            <person name="Wahyudi A.T."/>
            <person name="Murase Y."/>
            <person name="Takeyama H."/>
        </authorList>
    </citation>
    <scope>NUCLEOTIDE SEQUENCE [LARGE SCALE GENOMIC DNA]</scope>
    <source>
        <strain>ATCC 700264 / AMB-1</strain>
    </source>
</reference>
<organism>
    <name type="scientific">Paramagnetospirillum magneticum (strain ATCC 700264 / AMB-1)</name>
    <name type="common">Magnetospirillum magneticum</name>
    <dbReference type="NCBI Taxonomy" id="342108"/>
    <lineage>
        <taxon>Bacteria</taxon>
        <taxon>Pseudomonadati</taxon>
        <taxon>Pseudomonadota</taxon>
        <taxon>Alphaproteobacteria</taxon>
        <taxon>Rhodospirillales</taxon>
        <taxon>Magnetospirillaceae</taxon>
        <taxon>Paramagnetospirillum</taxon>
    </lineage>
</organism>
<protein>
    <recommendedName>
        <fullName evidence="1">Phosphoglucosamine mutase</fullName>
        <ecNumber evidence="1">5.4.2.10</ecNumber>
    </recommendedName>
</protein>
<accession>Q2W2C2</accession>
<proteinExistence type="inferred from homology"/>
<evidence type="ECO:0000255" key="1">
    <source>
        <dbReference type="HAMAP-Rule" id="MF_01554"/>
    </source>
</evidence>
<comment type="function">
    <text evidence="1">Catalyzes the conversion of glucosamine-6-phosphate to glucosamine-1-phosphate.</text>
</comment>
<comment type="catalytic activity">
    <reaction evidence="1">
        <text>alpha-D-glucosamine 1-phosphate = D-glucosamine 6-phosphate</text>
        <dbReference type="Rhea" id="RHEA:23424"/>
        <dbReference type="ChEBI" id="CHEBI:58516"/>
        <dbReference type="ChEBI" id="CHEBI:58725"/>
        <dbReference type="EC" id="5.4.2.10"/>
    </reaction>
</comment>
<comment type="cofactor">
    <cofactor evidence="1">
        <name>Mg(2+)</name>
        <dbReference type="ChEBI" id="CHEBI:18420"/>
    </cofactor>
    <text evidence="1">Binds 1 Mg(2+) ion per subunit.</text>
</comment>
<comment type="PTM">
    <text evidence="1">Activated by phosphorylation.</text>
</comment>
<comment type="similarity">
    <text evidence="1">Belongs to the phosphohexose mutase family.</text>
</comment>
<sequence>MTRKLFGTDGIRGTANTDPMTAEMAMKLGMAAGRHFTRGDHRHVVVIGKDTRLSGYLLEPALTAGFISVGMDVVLLGPLPTPAVALLTRSMRADLGVMISASHNPYEDNGIKLFGPDGFKLSDEDELTIEASMSNGLESCRVGSDHLGRAKRLDDAAGRYIEYAKYTFPRGLRLDGLKIVVDCANGAAYKVAPTVLWELGAEVIPVAVNPDGFNINKNCGSLHTETMREQVVAHGAHLGIALDGDADRVVLCDELGHMIDGDQLMALIGDLWHRSGQLKGGGIVATVMSNLGLERFLDQRGLKTIRTAVGDRYVLEHMRRDGFNVGGEQSGHIILSDHSTTGDGLVAGLQVLAALVQSGKPASEMLRLFTPLPQVLKNVRVAKGSVAEVLAAPAVEAAIRDAEAKLAGQGRLLIRKSGTEPLIRVMAEGEDEGLVEASVDAIVETIRRAAG</sequence>
<dbReference type="EC" id="5.4.2.10" evidence="1"/>
<dbReference type="EMBL" id="AP007255">
    <property type="protein sequence ID" value="BAE52003.1"/>
    <property type="molecule type" value="Genomic_DNA"/>
</dbReference>
<dbReference type="RefSeq" id="WP_011385564.1">
    <property type="nucleotide sequence ID" value="NC_007626.1"/>
</dbReference>
<dbReference type="SMR" id="Q2W2C2"/>
<dbReference type="STRING" id="342108.amb3199"/>
<dbReference type="KEGG" id="mag:amb3199"/>
<dbReference type="HOGENOM" id="CLU_016950_7_0_5"/>
<dbReference type="OrthoDB" id="9803322at2"/>
<dbReference type="Proteomes" id="UP000007058">
    <property type="component" value="Chromosome"/>
</dbReference>
<dbReference type="GO" id="GO:0005829">
    <property type="term" value="C:cytosol"/>
    <property type="evidence" value="ECO:0007669"/>
    <property type="project" value="TreeGrafter"/>
</dbReference>
<dbReference type="GO" id="GO:0000287">
    <property type="term" value="F:magnesium ion binding"/>
    <property type="evidence" value="ECO:0007669"/>
    <property type="project" value="UniProtKB-UniRule"/>
</dbReference>
<dbReference type="GO" id="GO:0008966">
    <property type="term" value="F:phosphoglucosamine mutase activity"/>
    <property type="evidence" value="ECO:0007669"/>
    <property type="project" value="UniProtKB-UniRule"/>
</dbReference>
<dbReference type="GO" id="GO:0004615">
    <property type="term" value="F:phosphomannomutase activity"/>
    <property type="evidence" value="ECO:0007669"/>
    <property type="project" value="TreeGrafter"/>
</dbReference>
<dbReference type="GO" id="GO:0005975">
    <property type="term" value="P:carbohydrate metabolic process"/>
    <property type="evidence" value="ECO:0007669"/>
    <property type="project" value="InterPro"/>
</dbReference>
<dbReference type="GO" id="GO:0009252">
    <property type="term" value="P:peptidoglycan biosynthetic process"/>
    <property type="evidence" value="ECO:0007669"/>
    <property type="project" value="TreeGrafter"/>
</dbReference>
<dbReference type="GO" id="GO:0006048">
    <property type="term" value="P:UDP-N-acetylglucosamine biosynthetic process"/>
    <property type="evidence" value="ECO:0007669"/>
    <property type="project" value="TreeGrafter"/>
</dbReference>
<dbReference type="CDD" id="cd05802">
    <property type="entry name" value="GlmM"/>
    <property type="match status" value="1"/>
</dbReference>
<dbReference type="FunFam" id="3.30.310.50:FF:000001">
    <property type="entry name" value="Phosphoglucosamine mutase"/>
    <property type="match status" value="1"/>
</dbReference>
<dbReference type="FunFam" id="3.40.120.10:FF:000001">
    <property type="entry name" value="Phosphoglucosamine mutase"/>
    <property type="match status" value="1"/>
</dbReference>
<dbReference type="FunFam" id="3.40.120.10:FF:000002">
    <property type="entry name" value="Phosphoglucosamine mutase"/>
    <property type="match status" value="1"/>
</dbReference>
<dbReference type="Gene3D" id="3.40.120.10">
    <property type="entry name" value="Alpha-D-Glucose-1,6-Bisphosphate, subunit A, domain 3"/>
    <property type="match status" value="3"/>
</dbReference>
<dbReference type="Gene3D" id="3.30.310.50">
    <property type="entry name" value="Alpha-D-phosphohexomutase, C-terminal domain"/>
    <property type="match status" value="1"/>
</dbReference>
<dbReference type="HAMAP" id="MF_01554_B">
    <property type="entry name" value="GlmM_B"/>
    <property type="match status" value="1"/>
</dbReference>
<dbReference type="InterPro" id="IPR005844">
    <property type="entry name" value="A-D-PHexomutase_a/b/a-I"/>
</dbReference>
<dbReference type="InterPro" id="IPR016055">
    <property type="entry name" value="A-D-PHexomutase_a/b/a-I/II/III"/>
</dbReference>
<dbReference type="InterPro" id="IPR005845">
    <property type="entry name" value="A-D-PHexomutase_a/b/a-II"/>
</dbReference>
<dbReference type="InterPro" id="IPR005846">
    <property type="entry name" value="A-D-PHexomutase_a/b/a-III"/>
</dbReference>
<dbReference type="InterPro" id="IPR005843">
    <property type="entry name" value="A-D-PHexomutase_C"/>
</dbReference>
<dbReference type="InterPro" id="IPR036900">
    <property type="entry name" value="A-D-PHexomutase_C_sf"/>
</dbReference>
<dbReference type="InterPro" id="IPR016066">
    <property type="entry name" value="A-D-PHexomutase_CS"/>
</dbReference>
<dbReference type="InterPro" id="IPR005841">
    <property type="entry name" value="Alpha-D-phosphohexomutase_SF"/>
</dbReference>
<dbReference type="InterPro" id="IPR006352">
    <property type="entry name" value="GlmM_bact"/>
</dbReference>
<dbReference type="InterPro" id="IPR050060">
    <property type="entry name" value="Phosphoglucosamine_mutase"/>
</dbReference>
<dbReference type="NCBIfam" id="TIGR01455">
    <property type="entry name" value="glmM"/>
    <property type="match status" value="1"/>
</dbReference>
<dbReference type="NCBIfam" id="NF008139">
    <property type="entry name" value="PRK10887.1"/>
    <property type="match status" value="1"/>
</dbReference>
<dbReference type="PANTHER" id="PTHR42946:SF1">
    <property type="entry name" value="PHOSPHOGLUCOMUTASE (ALPHA-D-GLUCOSE-1,6-BISPHOSPHATE-DEPENDENT)"/>
    <property type="match status" value="1"/>
</dbReference>
<dbReference type="PANTHER" id="PTHR42946">
    <property type="entry name" value="PHOSPHOHEXOSE MUTASE"/>
    <property type="match status" value="1"/>
</dbReference>
<dbReference type="Pfam" id="PF02878">
    <property type="entry name" value="PGM_PMM_I"/>
    <property type="match status" value="1"/>
</dbReference>
<dbReference type="Pfam" id="PF02879">
    <property type="entry name" value="PGM_PMM_II"/>
    <property type="match status" value="1"/>
</dbReference>
<dbReference type="Pfam" id="PF02880">
    <property type="entry name" value="PGM_PMM_III"/>
    <property type="match status" value="1"/>
</dbReference>
<dbReference type="Pfam" id="PF00408">
    <property type="entry name" value="PGM_PMM_IV"/>
    <property type="match status" value="1"/>
</dbReference>
<dbReference type="PRINTS" id="PR00509">
    <property type="entry name" value="PGMPMM"/>
</dbReference>
<dbReference type="SUPFAM" id="SSF55957">
    <property type="entry name" value="Phosphoglucomutase, C-terminal domain"/>
    <property type="match status" value="1"/>
</dbReference>
<dbReference type="SUPFAM" id="SSF53738">
    <property type="entry name" value="Phosphoglucomutase, first 3 domains"/>
    <property type="match status" value="3"/>
</dbReference>
<dbReference type="PROSITE" id="PS00710">
    <property type="entry name" value="PGM_PMM"/>
    <property type="match status" value="1"/>
</dbReference>
<name>GLMM_PARM1</name>
<gene>
    <name evidence="1" type="primary">glmM</name>
    <name type="ordered locus">amb3199</name>
</gene>
<feature type="chain" id="PRO_0000301334" description="Phosphoglucosamine mutase">
    <location>
        <begin position="1"/>
        <end position="451"/>
    </location>
</feature>
<feature type="active site" description="Phosphoserine intermediate" evidence="1">
    <location>
        <position position="102"/>
    </location>
</feature>
<feature type="binding site" description="via phosphate group" evidence="1">
    <location>
        <position position="102"/>
    </location>
    <ligand>
        <name>Mg(2+)</name>
        <dbReference type="ChEBI" id="CHEBI:18420"/>
    </ligand>
</feature>
<feature type="binding site" evidence="1">
    <location>
        <position position="243"/>
    </location>
    <ligand>
        <name>Mg(2+)</name>
        <dbReference type="ChEBI" id="CHEBI:18420"/>
    </ligand>
</feature>
<feature type="binding site" evidence="1">
    <location>
        <position position="245"/>
    </location>
    <ligand>
        <name>Mg(2+)</name>
        <dbReference type="ChEBI" id="CHEBI:18420"/>
    </ligand>
</feature>
<feature type="binding site" evidence="1">
    <location>
        <position position="247"/>
    </location>
    <ligand>
        <name>Mg(2+)</name>
        <dbReference type="ChEBI" id="CHEBI:18420"/>
    </ligand>
</feature>
<feature type="modified residue" description="Phosphoserine" evidence="1">
    <location>
        <position position="102"/>
    </location>
</feature>
<keyword id="KW-0413">Isomerase</keyword>
<keyword id="KW-0460">Magnesium</keyword>
<keyword id="KW-0479">Metal-binding</keyword>
<keyword id="KW-0597">Phosphoprotein</keyword>